<dbReference type="EMBL" id="CP000133">
    <property type="protein sequence ID" value="ABC90390.1"/>
    <property type="molecule type" value="Genomic_DNA"/>
</dbReference>
<dbReference type="RefSeq" id="WP_004680013.1">
    <property type="nucleotide sequence ID" value="NC_007761.1"/>
</dbReference>
<dbReference type="SMR" id="Q2K9U6"/>
<dbReference type="GeneID" id="91148040"/>
<dbReference type="KEGG" id="ret:RHE_CH01588"/>
<dbReference type="eggNOG" id="COG1219">
    <property type="taxonomic scope" value="Bacteria"/>
</dbReference>
<dbReference type="HOGENOM" id="CLU_014218_8_2_5"/>
<dbReference type="OrthoDB" id="9804062at2"/>
<dbReference type="Proteomes" id="UP000001936">
    <property type="component" value="Chromosome"/>
</dbReference>
<dbReference type="GO" id="GO:0009376">
    <property type="term" value="C:HslUV protease complex"/>
    <property type="evidence" value="ECO:0007669"/>
    <property type="project" value="TreeGrafter"/>
</dbReference>
<dbReference type="GO" id="GO:0005524">
    <property type="term" value="F:ATP binding"/>
    <property type="evidence" value="ECO:0007669"/>
    <property type="project" value="UniProtKB-UniRule"/>
</dbReference>
<dbReference type="GO" id="GO:0016887">
    <property type="term" value="F:ATP hydrolysis activity"/>
    <property type="evidence" value="ECO:0007669"/>
    <property type="project" value="InterPro"/>
</dbReference>
<dbReference type="GO" id="GO:0140662">
    <property type="term" value="F:ATP-dependent protein folding chaperone"/>
    <property type="evidence" value="ECO:0007669"/>
    <property type="project" value="InterPro"/>
</dbReference>
<dbReference type="GO" id="GO:0046983">
    <property type="term" value="F:protein dimerization activity"/>
    <property type="evidence" value="ECO:0007669"/>
    <property type="project" value="InterPro"/>
</dbReference>
<dbReference type="GO" id="GO:0051082">
    <property type="term" value="F:unfolded protein binding"/>
    <property type="evidence" value="ECO:0007669"/>
    <property type="project" value="UniProtKB-UniRule"/>
</dbReference>
<dbReference type="GO" id="GO:0008270">
    <property type="term" value="F:zinc ion binding"/>
    <property type="evidence" value="ECO:0007669"/>
    <property type="project" value="InterPro"/>
</dbReference>
<dbReference type="GO" id="GO:0051301">
    <property type="term" value="P:cell division"/>
    <property type="evidence" value="ECO:0007669"/>
    <property type="project" value="TreeGrafter"/>
</dbReference>
<dbReference type="GO" id="GO:0051603">
    <property type="term" value="P:proteolysis involved in protein catabolic process"/>
    <property type="evidence" value="ECO:0007669"/>
    <property type="project" value="TreeGrafter"/>
</dbReference>
<dbReference type="CDD" id="cd19497">
    <property type="entry name" value="RecA-like_ClpX"/>
    <property type="match status" value="1"/>
</dbReference>
<dbReference type="FunFam" id="1.10.8.60:FF:000002">
    <property type="entry name" value="ATP-dependent Clp protease ATP-binding subunit ClpX"/>
    <property type="match status" value="1"/>
</dbReference>
<dbReference type="FunFam" id="3.40.50.300:FF:000005">
    <property type="entry name" value="ATP-dependent Clp protease ATP-binding subunit ClpX"/>
    <property type="match status" value="1"/>
</dbReference>
<dbReference type="Gene3D" id="1.10.8.60">
    <property type="match status" value="1"/>
</dbReference>
<dbReference type="Gene3D" id="6.20.220.10">
    <property type="entry name" value="ClpX chaperone, C4-type zinc finger domain"/>
    <property type="match status" value="1"/>
</dbReference>
<dbReference type="Gene3D" id="3.40.50.300">
    <property type="entry name" value="P-loop containing nucleotide triphosphate hydrolases"/>
    <property type="match status" value="1"/>
</dbReference>
<dbReference type="HAMAP" id="MF_00175">
    <property type="entry name" value="ClpX"/>
    <property type="match status" value="1"/>
</dbReference>
<dbReference type="InterPro" id="IPR003593">
    <property type="entry name" value="AAA+_ATPase"/>
</dbReference>
<dbReference type="InterPro" id="IPR050052">
    <property type="entry name" value="ATP-dep_Clp_protease_ClpX"/>
</dbReference>
<dbReference type="InterPro" id="IPR003959">
    <property type="entry name" value="ATPase_AAA_core"/>
</dbReference>
<dbReference type="InterPro" id="IPR019489">
    <property type="entry name" value="Clp_ATPase_C"/>
</dbReference>
<dbReference type="InterPro" id="IPR004487">
    <property type="entry name" value="Clp_protease_ATP-bd_su_ClpX"/>
</dbReference>
<dbReference type="InterPro" id="IPR046425">
    <property type="entry name" value="ClpX_bact"/>
</dbReference>
<dbReference type="InterPro" id="IPR027417">
    <property type="entry name" value="P-loop_NTPase"/>
</dbReference>
<dbReference type="InterPro" id="IPR010603">
    <property type="entry name" value="Znf_CppX_C4"/>
</dbReference>
<dbReference type="InterPro" id="IPR038366">
    <property type="entry name" value="Znf_CppX_C4_sf"/>
</dbReference>
<dbReference type="NCBIfam" id="TIGR00382">
    <property type="entry name" value="clpX"/>
    <property type="match status" value="1"/>
</dbReference>
<dbReference type="NCBIfam" id="NF003745">
    <property type="entry name" value="PRK05342.1"/>
    <property type="match status" value="1"/>
</dbReference>
<dbReference type="PANTHER" id="PTHR48102:SF7">
    <property type="entry name" value="ATP-DEPENDENT CLP PROTEASE ATP-BINDING SUBUNIT CLPX-LIKE, MITOCHONDRIAL"/>
    <property type="match status" value="1"/>
</dbReference>
<dbReference type="PANTHER" id="PTHR48102">
    <property type="entry name" value="ATP-DEPENDENT CLP PROTEASE ATP-BINDING SUBUNIT CLPX-LIKE, MITOCHONDRIAL-RELATED"/>
    <property type="match status" value="1"/>
</dbReference>
<dbReference type="Pfam" id="PF07724">
    <property type="entry name" value="AAA_2"/>
    <property type="match status" value="1"/>
</dbReference>
<dbReference type="Pfam" id="PF10431">
    <property type="entry name" value="ClpB_D2-small"/>
    <property type="match status" value="1"/>
</dbReference>
<dbReference type="Pfam" id="PF06689">
    <property type="entry name" value="zf-C4_ClpX"/>
    <property type="match status" value="1"/>
</dbReference>
<dbReference type="SMART" id="SM00382">
    <property type="entry name" value="AAA"/>
    <property type="match status" value="1"/>
</dbReference>
<dbReference type="SMART" id="SM01086">
    <property type="entry name" value="ClpB_D2-small"/>
    <property type="match status" value="1"/>
</dbReference>
<dbReference type="SMART" id="SM00994">
    <property type="entry name" value="zf-C4_ClpX"/>
    <property type="match status" value="1"/>
</dbReference>
<dbReference type="SUPFAM" id="SSF57716">
    <property type="entry name" value="Glucocorticoid receptor-like (DNA-binding domain)"/>
    <property type="match status" value="1"/>
</dbReference>
<dbReference type="SUPFAM" id="SSF52540">
    <property type="entry name" value="P-loop containing nucleoside triphosphate hydrolases"/>
    <property type="match status" value="1"/>
</dbReference>
<dbReference type="PROSITE" id="PS51902">
    <property type="entry name" value="CLPX_ZB"/>
    <property type="match status" value="1"/>
</dbReference>
<protein>
    <recommendedName>
        <fullName evidence="1">ATP-dependent Clp protease ATP-binding subunit ClpX</fullName>
    </recommendedName>
</protein>
<sequence>MSKVSGSNGGDSKNTLYCSFCGKSQHEVRKLIAGPTVFICDECVELCMDIIREENKSSMVKSRDGVPTPQDIIKVLDEYVIGQRQAKKILSVAVHNHYKRLAHASKNGEVELAKSNIMLVGPTGCGKTYLAQTLARIIDVPFTMADATTLTEAGYVGEDVENIILKLLQAADYNVERAQRGIVYIDEVDKISRKSDNPSITRDVSGEGVQQALLKIMEGTVASVPPQGGRKHPQQEFLQVDTTNILFICGGAFAGLDKIISARGEKTSIGFGATVKAQDDRRVGEVLRELEPEDLVKFGLIPEFIGRLPVLATLEDLDEDALIQILSEPKNALIKQYQRLFEMEDVELTFHEDALREIARKAIVRKTGARGLRSIMEKILLDTMFELPTLEGVREVVISEEVVRGSARPLYIYADRQEEKANASA</sequence>
<name>CLPX_RHIEC</name>
<gene>
    <name evidence="1" type="primary">clpX</name>
    <name type="ordered locus">RHE_CH01588</name>
</gene>
<organism>
    <name type="scientific">Rhizobium etli (strain ATCC 51251 / DSM 11541 / JCM 21823 / NBRC 15573 / CFN 42)</name>
    <dbReference type="NCBI Taxonomy" id="347834"/>
    <lineage>
        <taxon>Bacteria</taxon>
        <taxon>Pseudomonadati</taxon>
        <taxon>Pseudomonadota</taxon>
        <taxon>Alphaproteobacteria</taxon>
        <taxon>Hyphomicrobiales</taxon>
        <taxon>Rhizobiaceae</taxon>
        <taxon>Rhizobium/Agrobacterium group</taxon>
        <taxon>Rhizobium</taxon>
    </lineage>
</organism>
<accession>Q2K9U6</accession>
<comment type="function">
    <text evidence="1">ATP-dependent specificity component of the Clp protease. It directs the protease to specific substrates. Can perform chaperone functions in the absence of ClpP.</text>
</comment>
<comment type="subunit">
    <text evidence="1">Component of the ClpX-ClpP complex. Forms a hexameric ring that, in the presence of ATP, binds to fourteen ClpP subunits assembled into a disk-like structure with a central cavity, resembling the structure of eukaryotic proteasomes.</text>
</comment>
<comment type="similarity">
    <text evidence="1">Belongs to the ClpX chaperone family.</text>
</comment>
<feature type="chain" id="PRO_1000024630" description="ATP-dependent Clp protease ATP-binding subunit ClpX">
    <location>
        <begin position="1"/>
        <end position="425"/>
    </location>
</feature>
<feature type="domain" description="ClpX-type ZB" evidence="2">
    <location>
        <begin position="6"/>
        <end position="59"/>
    </location>
</feature>
<feature type="binding site" evidence="2">
    <location>
        <position position="18"/>
    </location>
    <ligand>
        <name>Zn(2+)</name>
        <dbReference type="ChEBI" id="CHEBI:29105"/>
    </ligand>
</feature>
<feature type="binding site" evidence="2">
    <location>
        <position position="21"/>
    </location>
    <ligand>
        <name>Zn(2+)</name>
        <dbReference type="ChEBI" id="CHEBI:29105"/>
    </ligand>
</feature>
<feature type="binding site" evidence="2">
    <location>
        <position position="40"/>
    </location>
    <ligand>
        <name>Zn(2+)</name>
        <dbReference type="ChEBI" id="CHEBI:29105"/>
    </ligand>
</feature>
<feature type="binding site" evidence="2">
    <location>
        <position position="43"/>
    </location>
    <ligand>
        <name>Zn(2+)</name>
        <dbReference type="ChEBI" id="CHEBI:29105"/>
    </ligand>
</feature>
<feature type="binding site" evidence="1">
    <location>
        <begin position="122"/>
        <end position="129"/>
    </location>
    <ligand>
        <name>ATP</name>
        <dbReference type="ChEBI" id="CHEBI:30616"/>
    </ligand>
</feature>
<reference key="1">
    <citation type="journal article" date="2006" name="Proc. Natl. Acad. Sci. U.S.A.">
        <title>The partitioned Rhizobium etli genome: genetic and metabolic redundancy in seven interacting replicons.</title>
        <authorList>
            <person name="Gonzalez V."/>
            <person name="Santamaria R.I."/>
            <person name="Bustos P."/>
            <person name="Hernandez-Gonzalez I."/>
            <person name="Medrano-Soto A."/>
            <person name="Moreno-Hagelsieb G."/>
            <person name="Janga S.C."/>
            <person name="Ramirez M.A."/>
            <person name="Jimenez-Jacinto V."/>
            <person name="Collado-Vides J."/>
            <person name="Davila G."/>
        </authorList>
    </citation>
    <scope>NUCLEOTIDE SEQUENCE [LARGE SCALE GENOMIC DNA]</scope>
    <source>
        <strain>ATCC 51251 / DSM 11541 / JCM 21823 / NBRC 15573 / CFN 42</strain>
    </source>
</reference>
<keyword id="KW-0067">ATP-binding</keyword>
<keyword id="KW-0143">Chaperone</keyword>
<keyword id="KW-0479">Metal-binding</keyword>
<keyword id="KW-0547">Nucleotide-binding</keyword>
<keyword id="KW-1185">Reference proteome</keyword>
<keyword id="KW-0862">Zinc</keyword>
<evidence type="ECO:0000255" key="1">
    <source>
        <dbReference type="HAMAP-Rule" id="MF_00175"/>
    </source>
</evidence>
<evidence type="ECO:0000255" key="2">
    <source>
        <dbReference type="PROSITE-ProRule" id="PRU01250"/>
    </source>
</evidence>
<proteinExistence type="inferred from homology"/>